<protein>
    <recommendedName>
        <fullName evidence="1">Small ribosomal subunit protein uS14</fullName>
    </recommendedName>
    <alternativeName>
        <fullName evidence="2">30S ribosomal protein S14</fullName>
    </alternativeName>
</protein>
<proteinExistence type="inferred from homology"/>
<name>RS14_PROM1</name>
<evidence type="ECO:0000255" key="1">
    <source>
        <dbReference type="HAMAP-Rule" id="MF_00537"/>
    </source>
</evidence>
<evidence type="ECO:0000305" key="2"/>
<organism>
    <name type="scientific">Prochlorococcus marinus (strain NATL1A)</name>
    <dbReference type="NCBI Taxonomy" id="167555"/>
    <lineage>
        <taxon>Bacteria</taxon>
        <taxon>Bacillati</taxon>
        <taxon>Cyanobacteriota</taxon>
        <taxon>Cyanophyceae</taxon>
        <taxon>Synechococcales</taxon>
        <taxon>Prochlorococcaceae</taxon>
        <taxon>Prochlorococcus</taxon>
    </lineage>
</organism>
<reference key="1">
    <citation type="journal article" date="2007" name="PLoS Genet.">
        <title>Patterns and implications of gene gain and loss in the evolution of Prochlorococcus.</title>
        <authorList>
            <person name="Kettler G.C."/>
            <person name="Martiny A.C."/>
            <person name="Huang K."/>
            <person name="Zucker J."/>
            <person name="Coleman M.L."/>
            <person name="Rodrigue S."/>
            <person name="Chen F."/>
            <person name="Lapidus A."/>
            <person name="Ferriera S."/>
            <person name="Johnson J."/>
            <person name="Steglich C."/>
            <person name="Church G.M."/>
            <person name="Richardson P."/>
            <person name="Chisholm S.W."/>
        </authorList>
    </citation>
    <scope>NUCLEOTIDE SEQUENCE [LARGE SCALE GENOMIC DNA]</scope>
    <source>
        <strain>NATL1A</strain>
    </source>
</reference>
<gene>
    <name evidence="1" type="primary">rpsN</name>
    <name evidence="1" type="synonym">rps14</name>
    <name type="ordered locus">NATL1_16641</name>
</gene>
<dbReference type="EMBL" id="CP000553">
    <property type="protein sequence ID" value="ABM76221.1"/>
    <property type="molecule type" value="Genomic_DNA"/>
</dbReference>
<dbReference type="RefSeq" id="WP_011824226.1">
    <property type="nucleotide sequence ID" value="NC_008819.1"/>
</dbReference>
<dbReference type="SMR" id="A2C411"/>
<dbReference type="KEGG" id="pme:NATL1_16641"/>
<dbReference type="eggNOG" id="COG0199">
    <property type="taxonomic scope" value="Bacteria"/>
</dbReference>
<dbReference type="HOGENOM" id="CLU_139869_0_1_3"/>
<dbReference type="Proteomes" id="UP000002592">
    <property type="component" value="Chromosome"/>
</dbReference>
<dbReference type="GO" id="GO:0005737">
    <property type="term" value="C:cytoplasm"/>
    <property type="evidence" value="ECO:0007669"/>
    <property type="project" value="UniProtKB-ARBA"/>
</dbReference>
<dbReference type="GO" id="GO:0015935">
    <property type="term" value="C:small ribosomal subunit"/>
    <property type="evidence" value="ECO:0007669"/>
    <property type="project" value="TreeGrafter"/>
</dbReference>
<dbReference type="GO" id="GO:0019843">
    <property type="term" value="F:rRNA binding"/>
    <property type="evidence" value="ECO:0007669"/>
    <property type="project" value="UniProtKB-UniRule"/>
</dbReference>
<dbReference type="GO" id="GO:0003735">
    <property type="term" value="F:structural constituent of ribosome"/>
    <property type="evidence" value="ECO:0007669"/>
    <property type="project" value="InterPro"/>
</dbReference>
<dbReference type="GO" id="GO:0006412">
    <property type="term" value="P:translation"/>
    <property type="evidence" value="ECO:0007669"/>
    <property type="project" value="UniProtKB-UniRule"/>
</dbReference>
<dbReference type="FunFam" id="1.10.287.1480:FF:000001">
    <property type="entry name" value="30S ribosomal protein S14"/>
    <property type="match status" value="1"/>
</dbReference>
<dbReference type="Gene3D" id="1.10.287.1480">
    <property type="match status" value="1"/>
</dbReference>
<dbReference type="HAMAP" id="MF_00537">
    <property type="entry name" value="Ribosomal_uS14_1"/>
    <property type="match status" value="1"/>
</dbReference>
<dbReference type="InterPro" id="IPR001209">
    <property type="entry name" value="Ribosomal_uS14"/>
</dbReference>
<dbReference type="InterPro" id="IPR023036">
    <property type="entry name" value="Ribosomal_uS14_bac/plastid"/>
</dbReference>
<dbReference type="InterPro" id="IPR018271">
    <property type="entry name" value="Ribosomal_uS14_CS"/>
</dbReference>
<dbReference type="NCBIfam" id="NF006477">
    <property type="entry name" value="PRK08881.1"/>
    <property type="match status" value="1"/>
</dbReference>
<dbReference type="PANTHER" id="PTHR19836">
    <property type="entry name" value="30S RIBOSOMAL PROTEIN S14"/>
    <property type="match status" value="1"/>
</dbReference>
<dbReference type="PANTHER" id="PTHR19836:SF19">
    <property type="entry name" value="SMALL RIBOSOMAL SUBUNIT PROTEIN US14M"/>
    <property type="match status" value="1"/>
</dbReference>
<dbReference type="Pfam" id="PF00253">
    <property type="entry name" value="Ribosomal_S14"/>
    <property type="match status" value="1"/>
</dbReference>
<dbReference type="SUPFAM" id="SSF57716">
    <property type="entry name" value="Glucocorticoid receptor-like (DNA-binding domain)"/>
    <property type="match status" value="1"/>
</dbReference>
<dbReference type="PROSITE" id="PS00527">
    <property type="entry name" value="RIBOSOMAL_S14"/>
    <property type="match status" value="1"/>
</dbReference>
<sequence>MAKKSMIARDVKRKKLVERYAAKRKSLIDAFKSAKDPMERLEIHRKIQALPRNCAPNRIRNRCWATGKPRGVYRDFGLCRNQLRSRAHNGELPGVVKSSW</sequence>
<feature type="chain" id="PRO_1000128497" description="Small ribosomal subunit protein uS14">
    <location>
        <begin position="1"/>
        <end position="100"/>
    </location>
</feature>
<accession>A2C411</accession>
<comment type="function">
    <text evidence="1">Binds 16S rRNA, required for the assembly of 30S particles and may also be responsible for determining the conformation of the 16S rRNA at the A site.</text>
</comment>
<comment type="subunit">
    <text evidence="1">Part of the 30S ribosomal subunit. Contacts proteins S3 and S10.</text>
</comment>
<comment type="similarity">
    <text evidence="1">Belongs to the universal ribosomal protein uS14 family.</text>
</comment>
<keyword id="KW-0687">Ribonucleoprotein</keyword>
<keyword id="KW-0689">Ribosomal protein</keyword>
<keyword id="KW-0694">RNA-binding</keyword>
<keyword id="KW-0699">rRNA-binding</keyword>